<organism>
    <name type="scientific">Laribacter hongkongensis (strain HLHK9)</name>
    <dbReference type="NCBI Taxonomy" id="557598"/>
    <lineage>
        <taxon>Bacteria</taxon>
        <taxon>Pseudomonadati</taxon>
        <taxon>Pseudomonadota</taxon>
        <taxon>Betaproteobacteria</taxon>
        <taxon>Neisseriales</taxon>
        <taxon>Aquaspirillaceae</taxon>
        <taxon>Laribacter</taxon>
    </lineage>
</organism>
<feature type="chain" id="PRO_1000196607" description="5'-nucleotidase SurE">
    <location>
        <begin position="1"/>
        <end position="247"/>
    </location>
</feature>
<feature type="binding site" evidence="1">
    <location>
        <position position="8"/>
    </location>
    <ligand>
        <name>a divalent metal cation</name>
        <dbReference type="ChEBI" id="CHEBI:60240"/>
    </ligand>
</feature>
<feature type="binding site" evidence="1">
    <location>
        <position position="9"/>
    </location>
    <ligand>
        <name>a divalent metal cation</name>
        <dbReference type="ChEBI" id="CHEBI:60240"/>
    </ligand>
</feature>
<feature type="binding site" evidence="1">
    <location>
        <position position="39"/>
    </location>
    <ligand>
        <name>a divalent metal cation</name>
        <dbReference type="ChEBI" id="CHEBI:60240"/>
    </ligand>
</feature>
<feature type="binding site" evidence="1">
    <location>
        <position position="91"/>
    </location>
    <ligand>
        <name>a divalent metal cation</name>
        <dbReference type="ChEBI" id="CHEBI:60240"/>
    </ligand>
</feature>
<protein>
    <recommendedName>
        <fullName evidence="1">5'-nucleotidase SurE</fullName>
        <ecNumber evidence="1">3.1.3.5</ecNumber>
    </recommendedName>
    <alternativeName>
        <fullName evidence="1">Nucleoside 5'-monophosphate phosphohydrolase</fullName>
    </alternativeName>
</protein>
<gene>
    <name evidence="1" type="primary">surE</name>
    <name type="ordered locus">LHK_00356</name>
</gene>
<name>SURE_LARHH</name>
<sequence>MRFLLSNDDGYFAPGIEALAAGLATLGTVTVVAPERDRSGASNSLTLDRPLMLRRAPNGFHFVNGTPTDCVHLAVTGMLDQQPDMVISGINHGANMGDDTVYSGTVAAATEGFLLGVPSLAVSLAAKPGEHLDTAVQVTLDIVRRMMDRPFTEPTLLNINVPDRPFHELRGTVATRLGRRHHAEPVVKSVNPRGDVVYWVGAAGPAQDAGEGTDFHAVREGFVSVTPLSIDLTGYRQLAELPAWLNP</sequence>
<keyword id="KW-0963">Cytoplasm</keyword>
<keyword id="KW-0378">Hydrolase</keyword>
<keyword id="KW-0479">Metal-binding</keyword>
<keyword id="KW-0547">Nucleotide-binding</keyword>
<keyword id="KW-1185">Reference proteome</keyword>
<comment type="function">
    <text evidence="1">Nucleotidase that shows phosphatase activity on nucleoside 5'-monophosphates.</text>
</comment>
<comment type="catalytic activity">
    <reaction evidence="1">
        <text>a ribonucleoside 5'-phosphate + H2O = a ribonucleoside + phosphate</text>
        <dbReference type="Rhea" id="RHEA:12484"/>
        <dbReference type="ChEBI" id="CHEBI:15377"/>
        <dbReference type="ChEBI" id="CHEBI:18254"/>
        <dbReference type="ChEBI" id="CHEBI:43474"/>
        <dbReference type="ChEBI" id="CHEBI:58043"/>
        <dbReference type="EC" id="3.1.3.5"/>
    </reaction>
</comment>
<comment type="cofactor">
    <cofactor evidence="1">
        <name>a divalent metal cation</name>
        <dbReference type="ChEBI" id="CHEBI:60240"/>
    </cofactor>
    <text evidence="1">Binds 1 divalent metal cation per subunit.</text>
</comment>
<comment type="subcellular location">
    <subcellularLocation>
        <location evidence="1">Cytoplasm</location>
    </subcellularLocation>
</comment>
<comment type="similarity">
    <text evidence="1">Belongs to the SurE nucleotidase family.</text>
</comment>
<dbReference type="EC" id="3.1.3.5" evidence="1"/>
<dbReference type="EMBL" id="CP001154">
    <property type="protein sequence ID" value="ACO73351.1"/>
    <property type="molecule type" value="Genomic_DNA"/>
</dbReference>
<dbReference type="RefSeq" id="WP_012695845.1">
    <property type="nucleotide sequence ID" value="NC_012559.1"/>
</dbReference>
<dbReference type="SMR" id="C1DBF4"/>
<dbReference type="STRING" id="557598.LHK_00356"/>
<dbReference type="KEGG" id="lhk:LHK_00356"/>
<dbReference type="eggNOG" id="COG0496">
    <property type="taxonomic scope" value="Bacteria"/>
</dbReference>
<dbReference type="HOGENOM" id="CLU_045192_1_2_4"/>
<dbReference type="Proteomes" id="UP000002010">
    <property type="component" value="Chromosome"/>
</dbReference>
<dbReference type="GO" id="GO:0005737">
    <property type="term" value="C:cytoplasm"/>
    <property type="evidence" value="ECO:0007669"/>
    <property type="project" value="UniProtKB-SubCell"/>
</dbReference>
<dbReference type="GO" id="GO:0008254">
    <property type="term" value="F:3'-nucleotidase activity"/>
    <property type="evidence" value="ECO:0007669"/>
    <property type="project" value="TreeGrafter"/>
</dbReference>
<dbReference type="GO" id="GO:0008253">
    <property type="term" value="F:5'-nucleotidase activity"/>
    <property type="evidence" value="ECO:0007669"/>
    <property type="project" value="UniProtKB-UniRule"/>
</dbReference>
<dbReference type="GO" id="GO:0004309">
    <property type="term" value="F:exopolyphosphatase activity"/>
    <property type="evidence" value="ECO:0007669"/>
    <property type="project" value="TreeGrafter"/>
</dbReference>
<dbReference type="GO" id="GO:0046872">
    <property type="term" value="F:metal ion binding"/>
    <property type="evidence" value="ECO:0007669"/>
    <property type="project" value="UniProtKB-UniRule"/>
</dbReference>
<dbReference type="GO" id="GO:0000166">
    <property type="term" value="F:nucleotide binding"/>
    <property type="evidence" value="ECO:0007669"/>
    <property type="project" value="UniProtKB-KW"/>
</dbReference>
<dbReference type="FunFam" id="3.40.1210.10:FF:000001">
    <property type="entry name" value="5'/3'-nucleotidase SurE"/>
    <property type="match status" value="1"/>
</dbReference>
<dbReference type="Gene3D" id="3.40.1210.10">
    <property type="entry name" value="Survival protein SurE-like phosphatase/nucleotidase"/>
    <property type="match status" value="1"/>
</dbReference>
<dbReference type="HAMAP" id="MF_00060">
    <property type="entry name" value="SurE"/>
    <property type="match status" value="1"/>
</dbReference>
<dbReference type="InterPro" id="IPR030048">
    <property type="entry name" value="SurE"/>
</dbReference>
<dbReference type="InterPro" id="IPR002828">
    <property type="entry name" value="SurE-like_Pase/nucleotidase"/>
</dbReference>
<dbReference type="InterPro" id="IPR036523">
    <property type="entry name" value="SurE-like_sf"/>
</dbReference>
<dbReference type="NCBIfam" id="NF001489">
    <property type="entry name" value="PRK00346.1-3"/>
    <property type="match status" value="1"/>
</dbReference>
<dbReference type="NCBIfam" id="NF001490">
    <property type="entry name" value="PRK00346.1-4"/>
    <property type="match status" value="1"/>
</dbReference>
<dbReference type="NCBIfam" id="TIGR00087">
    <property type="entry name" value="surE"/>
    <property type="match status" value="1"/>
</dbReference>
<dbReference type="PANTHER" id="PTHR30457">
    <property type="entry name" value="5'-NUCLEOTIDASE SURE"/>
    <property type="match status" value="1"/>
</dbReference>
<dbReference type="PANTHER" id="PTHR30457:SF12">
    <property type="entry name" value="5'_3'-NUCLEOTIDASE SURE"/>
    <property type="match status" value="1"/>
</dbReference>
<dbReference type="Pfam" id="PF01975">
    <property type="entry name" value="SurE"/>
    <property type="match status" value="1"/>
</dbReference>
<dbReference type="SUPFAM" id="SSF64167">
    <property type="entry name" value="SurE-like"/>
    <property type="match status" value="1"/>
</dbReference>
<accession>C1DBF4</accession>
<evidence type="ECO:0000255" key="1">
    <source>
        <dbReference type="HAMAP-Rule" id="MF_00060"/>
    </source>
</evidence>
<proteinExistence type="inferred from homology"/>
<reference key="1">
    <citation type="journal article" date="2009" name="PLoS Genet.">
        <title>The complete genome and proteome of Laribacter hongkongensis reveal potential mechanisms for adaptations to different temperatures and habitats.</title>
        <authorList>
            <person name="Woo P.C.Y."/>
            <person name="Lau S.K.P."/>
            <person name="Tse H."/>
            <person name="Teng J.L.L."/>
            <person name="Curreem S.O."/>
            <person name="Tsang A.K.L."/>
            <person name="Fan R.Y.Y."/>
            <person name="Wong G.K.M."/>
            <person name="Huang Y."/>
            <person name="Loman N.J."/>
            <person name="Snyder L.A.S."/>
            <person name="Cai J.J."/>
            <person name="Huang J.-D."/>
            <person name="Mak W."/>
            <person name="Pallen M.J."/>
            <person name="Lok S."/>
            <person name="Yuen K.-Y."/>
        </authorList>
    </citation>
    <scope>NUCLEOTIDE SEQUENCE [LARGE SCALE GENOMIC DNA]</scope>
    <source>
        <strain>HLHK9</strain>
    </source>
</reference>